<sequence>MARGPKKHLKRLAAPHHWLLDKLSGCYAPRPSAGPHKLRESLPLIVFLRNRLKYALNGREVKAILMQRHVKVDGKVRTDTTYPAGFMDVITLDATNENFRLVYDVKGRFAVHRITDEEASYKLGKVKKVQLGKKGVPYVVTHDGRTIRYPDPNIKVNDTVKIDLASGKITDFIKFDAGKLVYVTGGRNLGRIGTIVHKERHDGGFDLVHIKDSLDNTFVTRLNNVFVIGEQGKPYISLPKGKGIKLSIAEERDRRRAQQGL</sequence>
<accession>P0CX36</accession>
<accession>D3DLF2</accession>
<accession>P05753</accession>
<dbReference type="EMBL" id="M64294">
    <property type="protein sequence ID" value="AAA35012.1"/>
    <property type="molecule type" value="Genomic_DNA"/>
</dbReference>
<dbReference type="EMBL" id="U00030">
    <property type="protein sequence ID" value="AAB68372.1"/>
    <property type="molecule type" value="Genomic_DNA"/>
</dbReference>
<dbReference type="EMBL" id="BK006934">
    <property type="protein sequence ID" value="DAA06896.1"/>
    <property type="molecule type" value="Genomic_DNA"/>
</dbReference>
<dbReference type="PIR" id="S20054">
    <property type="entry name" value="S20054"/>
</dbReference>
<dbReference type="RefSeq" id="NP_012073.1">
    <property type="nucleotide sequence ID" value="NM_001179334.1"/>
</dbReference>
<dbReference type="PDB" id="7ZW0">
    <property type="method" value="EM"/>
    <property type="resolution" value="2.40 A"/>
    <property type="chains" value="sS=1-261"/>
</dbReference>
<dbReference type="PDB" id="8CAH">
    <property type="method" value="EM"/>
    <property type="resolution" value="3.00 A"/>
    <property type="chains" value="S=1-261"/>
</dbReference>
<dbReference type="PDB" id="8CAS">
    <property type="method" value="EM"/>
    <property type="resolution" value="3.30 A"/>
    <property type="chains" value="S=1-261"/>
</dbReference>
<dbReference type="PDB" id="8CBJ">
    <property type="method" value="EM"/>
    <property type="resolution" value="3.80 A"/>
    <property type="chains" value="E=1-261"/>
</dbReference>
<dbReference type="PDBsum" id="7ZW0"/>
<dbReference type="PDBsum" id="8CAH"/>
<dbReference type="PDBsum" id="8CAS"/>
<dbReference type="PDBsum" id="8CBJ"/>
<dbReference type="EMDB" id="EMD-14990"/>
<dbReference type="EMDB" id="EMD-16525"/>
<dbReference type="EMDB" id="EMD-16533"/>
<dbReference type="EMDB" id="EMD-16541"/>
<dbReference type="SMR" id="P0CX36"/>
<dbReference type="BioGRID" id="33901">
    <property type="interactions" value="269"/>
</dbReference>
<dbReference type="BioGRID" id="36637">
    <property type="interactions" value="399"/>
</dbReference>
<dbReference type="ComplexPortal" id="CPX-1599">
    <property type="entry name" value="40S cytosolic small ribosomal subunit"/>
</dbReference>
<dbReference type="FunCoup" id="P0CX36">
    <property type="interactions" value="1097"/>
</dbReference>
<dbReference type="IntAct" id="P0CX36">
    <property type="interactions" value="57"/>
</dbReference>
<dbReference type="MINT" id="P0CX36"/>
<dbReference type="CarbonylDB" id="P0CX36"/>
<dbReference type="iPTMnet" id="P0CX36"/>
<dbReference type="EnsemblFungi" id="YHR203C_mRNA">
    <property type="protein sequence ID" value="YHR203C"/>
    <property type="gene ID" value="YHR203C"/>
</dbReference>
<dbReference type="EnsemblFungi" id="YJR145C_mRNA">
    <property type="protein sequence ID" value="YJR145C"/>
    <property type="gene ID" value="YJR145C"/>
</dbReference>
<dbReference type="GeneID" id="856610"/>
<dbReference type="KEGG" id="sce:YHR203C"/>
<dbReference type="KEGG" id="sce:YJR145C"/>
<dbReference type="AGR" id="SGD:S000001246"/>
<dbReference type="SGD" id="S000001246">
    <property type="gene designation" value="RPS4B"/>
</dbReference>
<dbReference type="VEuPathDB" id="FungiDB:YHR203C"/>
<dbReference type="VEuPathDB" id="FungiDB:YJR145C"/>
<dbReference type="GeneTree" id="ENSGT00390000005569"/>
<dbReference type="HOGENOM" id="CLU_060400_1_0_1"/>
<dbReference type="InParanoid" id="P0CX36"/>
<dbReference type="OMA" id="GHIQLNL"/>
<dbReference type="OrthoDB" id="1109245at2759"/>
<dbReference type="BioCyc" id="YEAST:G3O-31230-MONOMER"/>
<dbReference type="Reactome" id="R-SCE-156827">
    <property type="pathway name" value="L13a-mediated translational silencing of Ceruloplasmin expression"/>
</dbReference>
<dbReference type="Reactome" id="R-SCE-1799339">
    <property type="pathway name" value="SRP-dependent cotranslational protein targeting to membrane"/>
</dbReference>
<dbReference type="Reactome" id="R-SCE-72649">
    <property type="pathway name" value="Translation initiation complex formation"/>
</dbReference>
<dbReference type="Reactome" id="R-SCE-72689">
    <property type="pathway name" value="Formation of a pool of free 40S subunits"/>
</dbReference>
<dbReference type="Reactome" id="R-SCE-72695">
    <property type="pathway name" value="Formation of the ternary complex, and subsequently, the 43S complex"/>
</dbReference>
<dbReference type="Reactome" id="R-SCE-72702">
    <property type="pathway name" value="Ribosomal scanning and start codon recognition"/>
</dbReference>
<dbReference type="Reactome" id="R-SCE-72706">
    <property type="pathway name" value="GTP hydrolysis and joining of the 60S ribosomal subunit"/>
</dbReference>
<dbReference type="Reactome" id="R-SCE-975956">
    <property type="pathway name" value="Nonsense Mediated Decay (NMD) independent of the Exon Junction Complex (EJC)"/>
</dbReference>
<dbReference type="Reactome" id="R-SCE-975957">
    <property type="pathway name" value="Nonsense Mediated Decay (NMD) enhanced by the Exon Junction Complex (EJC)"/>
</dbReference>
<dbReference type="BioGRID-ORCS" id="853610">
    <property type="hits" value="2 hits in 10 CRISPR screens"/>
</dbReference>
<dbReference type="BioGRID-ORCS" id="856610">
    <property type="hits" value="3 hits in 10 CRISPR screens"/>
</dbReference>
<dbReference type="CD-CODE" id="9B47C524">
    <property type="entry name" value="Peri-nucleolar condensate"/>
</dbReference>
<dbReference type="PRO" id="PR:P0CX36"/>
<dbReference type="Proteomes" id="UP000002311">
    <property type="component" value="Chromosome VIII"/>
</dbReference>
<dbReference type="RNAct" id="P0CX36">
    <property type="molecule type" value="protein"/>
</dbReference>
<dbReference type="ExpressionAtlas" id="P0CX36">
    <property type="expression patterns" value="baseline and differential"/>
</dbReference>
<dbReference type="GO" id="GO:0030686">
    <property type="term" value="C:90S preribosome"/>
    <property type="evidence" value="ECO:0007005"/>
    <property type="project" value="SGD"/>
</dbReference>
<dbReference type="GO" id="GO:0005829">
    <property type="term" value="C:cytosol"/>
    <property type="evidence" value="ECO:0000304"/>
    <property type="project" value="Reactome"/>
</dbReference>
<dbReference type="GO" id="GO:0022627">
    <property type="term" value="C:cytosolic small ribosomal subunit"/>
    <property type="evidence" value="ECO:0000314"/>
    <property type="project" value="SGD"/>
</dbReference>
<dbReference type="GO" id="GO:0003723">
    <property type="term" value="F:RNA binding"/>
    <property type="evidence" value="ECO:0000318"/>
    <property type="project" value="GO_Central"/>
</dbReference>
<dbReference type="GO" id="GO:0019843">
    <property type="term" value="F:rRNA binding"/>
    <property type="evidence" value="ECO:0007669"/>
    <property type="project" value="UniProtKB-KW"/>
</dbReference>
<dbReference type="GO" id="GO:0003735">
    <property type="term" value="F:structural constituent of ribosome"/>
    <property type="evidence" value="ECO:0000314"/>
    <property type="project" value="SGD"/>
</dbReference>
<dbReference type="GO" id="GO:0002181">
    <property type="term" value="P:cytoplasmic translation"/>
    <property type="evidence" value="ECO:0000305"/>
    <property type="project" value="SGD"/>
</dbReference>
<dbReference type="GO" id="GO:0006412">
    <property type="term" value="P:translation"/>
    <property type="evidence" value="ECO:0000318"/>
    <property type="project" value="GO_Central"/>
</dbReference>
<dbReference type="CDD" id="cd06087">
    <property type="entry name" value="KOW_RPS4"/>
    <property type="match status" value="1"/>
</dbReference>
<dbReference type="CDD" id="cd00165">
    <property type="entry name" value="S4"/>
    <property type="match status" value="1"/>
</dbReference>
<dbReference type="FunFam" id="2.30.30.30:FF:000005">
    <property type="entry name" value="40S ribosomal protein S4"/>
    <property type="match status" value="1"/>
</dbReference>
<dbReference type="FunFam" id="2.40.50.740:FF:000001">
    <property type="entry name" value="40S ribosomal protein S4"/>
    <property type="match status" value="1"/>
</dbReference>
<dbReference type="FunFam" id="3.10.290.10:FF:000002">
    <property type="entry name" value="40S ribosomal protein S4"/>
    <property type="match status" value="1"/>
</dbReference>
<dbReference type="Gene3D" id="2.30.30.30">
    <property type="match status" value="1"/>
</dbReference>
<dbReference type="Gene3D" id="2.40.50.740">
    <property type="match status" value="1"/>
</dbReference>
<dbReference type="Gene3D" id="3.10.290.10">
    <property type="entry name" value="RNA-binding S4 domain"/>
    <property type="match status" value="1"/>
</dbReference>
<dbReference type="HAMAP" id="MF_00485">
    <property type="entry name" value="Ribosomal_eS4"/>
    <property type="match status" value="1"/>
</dbReference>
<dbReference type="InterPro" id="IPR005824">
    <property type="entry name" value="KOW"/>
</dbReference>
<dbReference type="InterPro" id="IPR014722">
    <property type="entry name" value="Rib_uL2_dom2"/>
</dbReference>
<dbReference type="InterPro" id="IPR000876">
    <property type="entry name" value="Ribosomal_eS4"/>
</dbReference>
<dbReference type="InterPro" id="IPR032277">
    <property type="entry name" value="Ribosomal_eS4_C"/>
</dbReference>
<dbReference type="InterPro" id="IPR013845">
    <property type="entry name" value="Ribosomal_eS4_central_region"/>
</dbReference>
<dbReference type="InterPro" id="IPR038237">
    <property type="entry name" value="Ribosomal_eS4_central_sf"/>
</dbReference>
<dbReference type="InterPro" id="IPR041982">
    <property type="entry name" value="Ribosomal_eS4_KOW"/>
</dbReference>
<dbReference type="InterPro" id="IPR013843">
    <property type="entry name" value="Ribosomal_eS4_N"/>
</dbReference>
<dbReference type="InterPro" id="IPR018199">
    <property type="entry name" value="Ribosomal_eS4_N_CS"/>
</dbReference>
<dbReference type="InterPro" id="IPR002942">
    <property type="entry name" value="S4_RNA-bd"/>
</dbReference>
<dbReference type="InterPro" id="IPR036986">
    <property type="entry name" value="S4_RNA-bd_sf"/>
</dbReference>
<dbReference type="PANTHER" id="PTHR11581">
    <property type="entry name" value="30S/40S RIBOSOMAL PROTEIN S4"/>
    <property type="match status" value="1"/>
</dbReference>
<dbReference type="PANTHER" id="PTHR11581:SF0">
    <property type="entry name" value="SMALL RIBOSOMAL SUBUNIT PROTEIN ES4"/>
    <property type="match status" value="1"/>
</dbReference>
<dbReference type="Pfam" id="PF16121">
    <property type="entry name" value="40S_S4_C"/>
    <property type="match status" value="1"/>
</dbReference>
<dbReference type="Pfam" id="PF00467">
    <property type="entry name" value="KOW"/>
    <property type="match status" value="1"/>
</dbReference>
<dbReference type="Pfam" id="PF00900">
    <property type="entry name" value="Ribosomal_S4e"/>
    <property type="match status" value="1"/>
</dbReference>
<dbReference type="Pfam" id="PF08071">
    <property type="entry name" value="RS4NT"/>
    <property type="match status" value="1"/>
</dbReference>
<dbReference type="Pfam" id="PF01479">
    <property type="entry name" value="S4"/>
    <property type="match status" value="1"/>
</dbReference>
<dbReference type="PIRSF" id="PIRSF002116">
    <property type="entry name" value="Ribosomal_S4"/>
    <property type="match status" value="1"/>
</dbReference>
<dbReference type="SMART" id="SM00363">
    <property type="entry name" value="S4"/>
    <property type="match status" value="1"/>
</dbReference>
<dbReference type="SUPFAM" id="SSF55174">
    <property type="entry name" value="Alpha-L RNA-binding motif"/>
    <property type="match status" value="1"/>
</dbReference>
<dbReference type="PROSITE" id="PS00528">
    <property type="entry name" value="RIBOSOMAL_S4E"/>
    <property type="match status" value="1"/>
</dbReference>
<dbReference type="PROSITE" id="PS50889">
    <property type="entry name" value="S4"/>
    <property type="match status" value="1"/>
</dbReference>
<gene>
    <name evidence="6" type="primary">RPS4B</name>
    <name type="synonym">RPS7A</name>
    <name type="ordered locus">YHR203C</name>
</gene>
<comment type="function">
    <text evidence="8">Component of the ribosome, a large ribonucleoprotein complex responsible for the synthesis of proteins in the cell. The small ribosomal subunit (SSU) binds messenger RNAs (mRNAs) and translates the encoded message by selecting cognate aminoacyl-transfer RNA (tRNA) molecules. The large subunit (LSU) contains the ribosomal catalytic site termed the peptidyl transferase center (PTC), which catalyzes the formation of peptide bonds, thereby polymerizing the amino acids delivered by tRNAs into a polypeptide chain. The nascent polypeptides leave the ribosome through a tunnel in the LSU and interact with protein factors that function in enzymatic processing, targeting, and the membrane insertion of nascent chains at the exit of the ribosomal tunnel.</text>
</comment>
<comment type="subunit">
    <text evidence="3 9">Component of the small ribosomal subunit (SSU). Mature yeast ribosomes consist of a small (40S) and a large (60S) subunit. The 40S small subunit contains 1 molecule of ribosomal RNA (18S rRNA) and 33 different proteins (encoded by 57 genes). The large 60S subunit contains 3 rRNA molecules (25S, 5.8S and 5S rRNA) and 46 different proteins (encoded by 81 genes) (PubMed:22096102, PubMed:9559554).</text>
</comment>
<comment type="subcellular location">
    <subcellularLocation>
        <location evidence="1 3">Cytoplasm</location>
    </subcellularLocation>
</comment>
<comment type="miscellaneous">
    <text evidence="2">Present with 102000 molecules/cell in log phase SD medium.</text>
</comment>
<comment type="miscellaneous">
    <text evidence="7">There are 2 genes for eS4 in yeast.</text>
</comment>
<comment type="similarity">
    <text evidence="7">Belongs to the eukaryotic ribosomal protein eS4 family.</text>
</comment>
<name>RS4B_YEAST</name>
<keyword id="KW-0002">3D-structure</keyword>
<keyword id="KW-0963">Cytoplasm</keyword>
<keyword id="KW-0903">Direct protein sequencing</keyword>
<keyword id="KW-1017">Isopeptide bond</keyword>
<keyword id="KW-0597">Phosphoprotein</keyword>
<keyword id="KW-1185">Reference proteome</keyword>
<keyword id="KW-0687">Ribonucleoprotein</keyword>
<keyword id="KW-0689">Ribosomal protein</keyword>
<keyword id="KW-0694">RNA-binding</keyword>
<keyword id="KW-0699">rRNA-binding</keyword>
<keyword id="KW-0832">Ubl conjugation</keyword>
<protein>
    <recommendedName>
        <fullName evidence="5">Small ribosomal subunit protein eS4B</fullName>
    </recommendedName>
    <alternativeName>
        <fullName evidence="6">40S ribosomal protein S4-B</fullName>
    </alternativeName>
    <alternativeName>
        <fullName>RP5</fullName>
    </alternativeName>
    <alternativeName>
        <fullName>S7</fullName>
    </alternativeName>
    <alternativeName>
        <fullName>YS6</fullName>
    </alternativeName>
</protein>
<reference key="1">
    <citation type="journal article" date="1992" name="J. Biol. Chem.">
        <title>The yeast ribosomal protein S7 and its genes.</title>
        <authorList>
            <person name="Synetos D."/>
            <person name="Dabeva M.D."/>
            <person name="Warner J.R."/>
        </authorList>
    </citation>
    <scope>NUCLEOTIDE SEQUENCE [GENOMIC DNA]</scope>
</reference>
<reference key="2">
    <citation type="journal article" date="1994" name="Science">
        <title>Complete nucleotide sequence of Saccharomyces cerevisiae chromosome VIII.</title>
        <authorList>
            <person name="Johnston M."/>
            <person name="Andrews S."/>
            <person name="Brinkman R."/>
            <person name="Cooper J."/>
            <person name="Ding H."/>
            <person name="Dover J."/>
            <person name="Du Z."/>
            <person name="Favello A."/>
            <person name="Fulton L."/>
            <person name="Gattung S."/>
            <person name="Geisel C."/>
            <person name="Kirsten J."/>
            <person name="Kucaba T."/>
            <person name="Hillier L.W."/>
            <person name="Jier M."/>
            <person name="Johnston L."/>
            <person name="Langston Y."/>
            <person name="Latreille P."/>
            <person name="Louis E.J."/>
            <person name="Macri C."/>
            <person name="Mardis E."/>
            <person name="Menezes S."/>
            <person name="Mouser L."/>
            <person name="Nhan M."/>
            <person name="Rifkin L."/>
            <person name="Riles L."/>
            <person name="St Peter H."/>
            <person name="Trevaskis E."/>
            <person name="Vaughan K."/>
            <person name="Vignati D."/>
            <person name="Wilcox L."/>
            <person name="Wohldman P."/>
            <person name="Waterston R."/>
            <person name="Wilson R."/>
            <person name="Vaudin M."/>
        </authorList>
    </citation>
    <scope>NUCLEOTIDE SEQUENCE [LARGE SCALE GENOMIC DNA]</scope>
    <source>
        <strain>ATCC 204508 / S288c</strain>
    </source>
</reference>
<reference key="3">
    <citation type="submission" date="1997-09" db="EMBL/GenBank/DDBJ databases">
        <authorList>
            <person name="Jia Y."/>
            <person name="Cherry J.M."/>
        </authorList>
    </citation>
    <scope>SEQUENCE REVISION TO 5</scope>
</reference>
<reference key="4">
    <citation type="journal article" date="2014" name="G3 (Bethesda)">
        <title>The reference genome sequence of Saccharomyces cerevisiae: Then and now.</title>
        <authorList>
            <person name="Engel S.R."/>
            <person name="Dietrich F.S."/>
            <person name="Fisk D.G."/>
            <person name="Binkley G."/>
            <person name="Balakrishnan R."/>
            <person name="Costanzo M.C."/>
            <person name="Dwight S.S."/>
            <person name="Hitz B.C."/>
            <person name="Karra K."/>
            <person name="Nash R.S."/>
            <person name="Weng S."/>
            <person name="Wong E.D."/>
            <person name="Lloyd P."/>
            <person name="Skrzypek M.S."/>
            <person name="Miyasato S.R."/>
            <person name="Simison M."/>
            <person name="Cherry J.M."/>
        </authorList>
    </citation>
    <scope>GENOME REANNOTATION</scope>
    <source>
        <strain>ATCC 204508 / S288c</strain>
    </source>
</reference>
<reference key="5">
    <citation type="journal article" date="1982" name="Biochemistry">
        <title>Isolation of seventeen proteins and amino-terminal amino acid sequences of eight proteins from cytoplasmic ribosomes of yeast.</title>
        <authorList>
            <person name="Otaka E."/>
            <person name="Higo K."/>
            <person name="Osawa S."/>
        </authorList>
    </citation>
    <scope>PARTIAL PROTEIN SEQUENCE OF 2-29</scope>
    <scope>CLEAVAGE OF INITIATOR METHIONINE</scope>
</reference>
<reference key="6">
    <citation type="journal article" date="1998" name="Yeast">
        <title>The list of cytoplasmic ribosomal proteins of Saccharomyces cerevisiae.</title>
        <authorList>
            <person name="Planta R.J."/>
            <person name="Mager W.H."/>
        </authorList>
    </citation>
    <scope>NOMENCLATURE</scope>
    <scope>SUBUNIT</scope>
</reference>
<reference key="7">
    <citation type="journal article" date="2003" name="Nature">
        <title>Global analysis of protein localization in budding yeast.</title>
        <authorList>
            <person name="Huh W.-K."/>
            <person name="Falvo J.V."/>
            <person name="Gerke L.C."/>
            <person name="Carroll A.S."/>
            <person name="Howson R.W."/>
            <person name="Weissman J.S."/>
            <person name="O'Shea E.K."/>
        </authorList>
    </citation>
    <scope>SUBCELLULAR LOCATION [LARGE SCALE ANALYSIS]</scope>
</reference>
<reference key="8">
    <citation type="journal article" date="2003" name="Nature">
        <title>Global analysis of protein expression in yeast.</title>
        <authorList>
            <person name="Ghaemmaghami S."/>
            <person name="Huh W.-K."/>
            <person name="Bower K."/>
            <person name="Howson R.W."/>
            <person name="Belle A."/>
            <person name="Dephoure N."/>
            <person name="O'Shea E.K."/>
            <person name="Weissman J.S."/>
        </authorList>
    </citation>
    <scope>LEVEL OF PROTEIN EXPRESSION [LARGE SCALE ANALYSIS]</scope>
</reference>
<reference key="9">
    <citation type="journal article" date="2003" name="Nat. Biotechnol.">
        <title>A proteomics approach to understanding protein ubiquitination.</title>
        <authorList>
            <person name="Peng J."/>
            <person name="Schwartz D."/>
            <person name="Elias J.E."/>
            <person name="Thoreen C.C."/>
            <person name="Cheng D."/>
            <person name="Marsischky G."/>
            <person name="Roelofs J."/>
            <person name="Finley D."/>
            <person name="Gygi S.P."/>
        </authorList>
    </citation>
    <scope>UBIQUITINATION [LARGE SCALE ANALYSIS] AT LYS-168</scope>
    <scope>IDENTIFICATION BY MASS SPECTROMETRY</scope>
    <source>
        <strain>SUB592</strain>
    </source>
</reference>
<reference key="10">
    <citation type="journal article" date="2005" name="Mol. Cell. Proteomics">
        <title>Quantitative phosphoproteomics applied to the yeast pheromone signaling pathway.</title>
        <authorList>
            <person name="Gruhler A."/>
            <person name="Olsen J.V."/>
            <person name="Mohammed S."/>
            <person name="Mortensen P."/>
            <person name="Faergeman N.J."/>
            <person name="Mann M."/>
            <person name="Jensen O.N."/>
        </authorList>
    </citation>
    <scope>PHOSPHORYLATION [LARGE SCALE ANALYSIS] AT SER-247</scope>
    <scope>IDENTIFICATION BY MASS SPECTROMETRY [LARGE SCALE ANALYSIS]</scope>
    <source>
        <strain>YAL6B</strain>
    </source>
</reference>
<reference key="11">
    <citation type="journal article" date="2007" name="J. Proteome Res.">
        <title>Large-scale phosphorylation analysis of alpha-factor-arrested Saccharomyces cerevisiae.</title>
        <authorList>
            <person name="Li X."/>
            <person name="Gerber S.A."/>
            <person name="Rudner A.D."/>
            <person name="Beausoleil S.A."/>
            <person name="Haas W."/>
            <person name="Villen J."/>
            <person name="Elias J.E."/>
            <person name="Gygi S.P."/>
        </authorList>
    </citation>
    <scope>PHOSPHORYLATION [LARGE SCALE ANALYSIS] AT SER-32</scope>
    <scope>IDENTIFICATION BY MASS SPECTROMETRY [LARGE SCALE ANALYSIS]</scope>
    <source>
        <strain>ADR376</strain>
    </source>
</reference>
<reference key="12">
    <citation type="journal article" date="2007" name="Proc. Natl. Acad. Sci. U.S.A.">
        <title>Analysis of phosphorylation sites on proteins from Saccharomyces cerevisiae by electron transfer dissociation (ETD) mass spectrometry.</title>
        <authorList>
            <person name="Chi A."/>
            <person name="Huttenhower C."/>
            <person name="Geer L.Y."/>
            <person name="Coon J.J."/>
            <person name="Syka J.E.P."/>
            <person name="Bai D.L."/>
            <person name="Shabanowitz J."/>
            <person name="Burke D.J."/>
            <person name="Troyanskaya O.G."/>
            <person name="Hunt D.F."/>
        </authorList>
    </citation>
    <scope>PHOSPHORYLATION [LARGE SCALE ANALYSIS] AT THR-115</scope>
    <scope>IDENTIFICATION BY MASS SPECTROMETRY [LARGE SCALE ANALYSIS]</scope>
</reference>
<reference key="13">
    <citation type="journal article" date="2011" name="Science">
        <title>The structure of the eukaryotic ribosome at 3.0 A resolution.</title>
        <authorList>
            <person name="Ben-Shem A."/>
            <person name="Garreau de Loubresse N."/>
            <person name="Melnikov S."/>
            <person name="Jenner L."/>
            <person name="Yusupova G."/>
            <person name="Yusupov M."/>
        </authorList>
    </citation>
    <scope>SUBUNIT</scope>
    <scope>SUBCELLULAR LOCATION</scope>
</reference>
<reference key="14">
    <citation type="journal article" date="2012" name="Proteomics">
        <title>Sites of ubiquitin attachment in Saccharomyces cerevisiae.</title>
        <authorList>
            <person name="Starita L.M."/>
            <person name="Lo R.S."/>
            <person name="Eng J.K."/>
            <person name="von Haller P.D."/>
            <person name="Fields S."/>
        </authorList>
    </citation>
    <scope>UBIQUITINATION [LARGE SCALE ANALYSIS] AT LYS-62; LYS-134; LYS-161; LYS-168; LYS-174; LYS-179; LYS-211 AND LYS-233</scope>
    <scope>IDENTIFICATION BY MASS SPECTROMETRY [LARGE SCALE ANALYSIS]</scope>
</reference>
<reference key="15">
    <citation type="journal article" date="2014" name="Curr. Opin. Struct. Biol.">
        <title>A new system for naming ribosomal proteins.</title>
        <authorList>
            <person name="Ban N."/>
            <person name="Beckmann R."/>
            <person name="Cate J.H.D."/>
            <person name="Dinman J.D."/>
            <person name="Dragon F."/>
            <person name="Ellis S.R."/>
            <person name="Lafontaine D.L.J."/>
            <person name="Lindahl L."/>
            <person name="Liljas A."/>
            <person name="Lipton J.M."/>
            <person name="McAlear M.A."/>
            <person name="Moore P.B."/>
            <person name="Noller H.F."/>
            <person name="Ortega J."/>
            <person name="Panse V.G."/>
            <person name="Ramakrishnan V."/>
            <person name="Spahn C.M.T."/>
            <person name="Steitz T.A."/>
            <person name="Tchorzewski M."/>
            <person name="Tollervey D."/>
            <person name="Warren A.J."/>
            <person name="Williamson J.R."/>
            <person name="Wilson D."/>
            <person name="Yonath A."/>
            <person name="Yusupov M."/>
        </authorList>
    </citation>
    <scope>NOMENCLATURE</scope>
</reference>
<feature type="initiator methionine" description="Removed" evidence="4">
    <location>
        <position position="1"/>
    </location>
</feature>
<feature type="chain" id="PRO_0000409764" description="Small ribosomal subunit protein eS4B">
    <location>
        <begin position="2"/>
        <end position="261"/>
    </location>
</feature>
<feature type="domain" description="S4 RNA-binding">
    <location>
        <begin position="42"/>
        <end position="105"/>
    </location>
</feature>
<feature type="modified residue" description="Phosphoserine" evidence="12">
    <location>
        <position position="32"/>
    </location>
</feature>
<feature type="modified residue" description="Phosphothreonine" evidence="11">
    <location>
        <position position="115"/>
    </location>
</feature>
<feature type="modified residue" description="Phosphoserine" evidence="10">
    <location>
        <position position="247"/>
    </location>
</feature>
<feature type="cross-link" description="Glycyl lysine isopeptide (Lys-Gly) (interchain with G-Cter in ubiquitin)" evidence="13">
    <location>
        <position position="62"/>
    </location>
</feature>
<feature type="cross-link" description="Glycyl lysine isopeptide (Lys-Gly) (interchain with G-Cter in ubiquitin)" evidence="13">
    <location>
        <position position="134"/>
    </location>
</feature>
<feature type="cross-link" description="Glycyl lysine isopeptide (Lys-Gly) (interchain with G-Cter in ubiquitin)" evidence="13">
    <location>
        <position position="161"/>
    </location>
</feature>
<feature type="cross-link" description="Glycyl lysine isopeptide (Lys-Gly) (interchain with G-Cter in ubiquitin)" evidence="13">
    <location>
        <position position="168"/>
    </location>
</feature>
<feature type="cross-link" description="Glycyl lysine isopeptide (Lys-Gly) (interchain with G-Cter in ubiquitin)" evidence="13">
    <location>
        <position position="174"/>
    </location>
</feature>
<feature type="cross-link" description="Glycyl lysine isopeptide (Lys-Gly) (interchain with G-Cter in ubiquitin)" evidence="13">
    <location>
        <position position="179"/>
    </location>
</feature>
<feature type="cross-link" description="Glycyl lysine isopeptide (Lys-Gly) (interchain with G-Cter in ubiquitin)" evidence="13">
    <location>
        <position position="211"/>
    </location>
</feature>
<feature type="cross-link" description="Glycyl lysine isopeptide (Lys-Gly) (interchain with G-Cter in ubiquitin)" evidence="13">
    <location>
        <position position="233"/>
    </location>
</feature>
<feature type="helix" evidence="14">
    <location>
        <begin position="16"/>
        <end position="18"/>
    </location>
</feature>
<feature type="strand" evidence="14">
    <location>
        <begin position="22"/>
        <end position="24"/>
    </location>
</feature>
<feature type="strand" evidence="14">
    <location>
        <begin position="26"/>
        <end position="28"/>
    </location>
</feature>
<feature type="strand" evidence="14">
    <location>
        <begin position="33"/>
        <end position="36"/>
    </location>
</feature>
<feature type="helix" evidence="14">
    <location>
        <begin position="44"/>
        <end position="48"/>
    </location>
</feature>
<feature type="turn" evidence="14">
    <location>
        <begin position="49"/>
        <end position="51"/>
    </location>
</feature>
<feature type="helix" evidence="14">
    <location>
        <begin position="58"/>
        <end position="65"/>
    </location>
</feature>
<feature type="turn" evidence="14">
    <location>
        <begin position="66"/>
        <end position="68"/>
    </location>
</feature>
<feature type="strand" evidence="14">
    <location>
        <begin position="70"/>
        <end position="72"/>
    </location>
</feature>
<feature type="strand" evidence="14">
    <location>
        <begin position="89"/>
        <end position="92"/>
    </location>
</feature>
<feature type="helix" evidence="14">
    <location>
        <begin position="94"/>
        <end position="96"/>
    </location>
</feature>
<feature type="strand" evidence="14">
    <location>
        <begin position="97"/>
        <end position="103"/>
    </location>
</feature>
<feature type="strand" evidence="14">
    <location>
        <begin position="107"/>
        <end position="113"/>
    </location>
</feature>
<feature type="helix" evidence="14">
    <location>
        <begin position="118"/>
        <end position="120"/>
    </location>
</feature>
<feature type="strand" evidence="14">
    <location>
        <begin position="122"/>
        <end position="125"/>
    </location>
</feature>
<feature type="strand" evidence="14">
    <location>
        <begin position="128"/>
        <end position="131"/>
    </location>
</feature>
<feature type="helix" evidence="14">
    <location>
        <begin position="133"/>
        <end position="135"/>
    </location>
</feature>
<feature type="strand" evidence="14">
    <location>
        <begin position="137"/>
        <end position="140"/>
    </location>
</feature>
<feature type="strand" evidence="14">
    <location>
        <begin position="146"/>
        <end position="149"/>
    </location>
</feature>
<feature type="strand" evidence="14">
    <location>
        <begin position="159"/>
        <end position="162"/>
    </location>
</feature>
<feature type="strand" evidence="14">
    <location>
        <begin position="164"/>
        <end position="167"/>
    </location>
</feature>
<feature type="strand" evidence="14">
    <location>
        <begin position="169"/>
        <end position="173"/>
    </location>
</feature>
<feature type="strand" evidence="14">
    <location>
        <begin position="180"/>
        <end position="183"/>
    </location>
</feature>
<feature type="turn" evidence="14">
    <location>
        <begin position="187"/>
        <end position="190"/>
    </location>
</feature>
<feature type="strand" evidence="14">
    <location>
        <begin position="197"/>
        <end position="199"/>
    </location>
</feature>
<feature type="strand" evidence="14">
    <location>
        <begin position="207"/>
        <end position="211"/>
    </location>
</feature>
<feature type="strand" evidence="14">
    <location>
        <begin position="217"/>
        <end position="221"/>
    </location>
</feature>
<feature type="strand" evidence="14">
    <location>
        <begin position="224"/>
        <end position="236"/>
    </location>
</feature>
<feature type="turn" evidence="14">
    <location>
        <begin position="240"/>
        <end position="243"/>
    </location>
</feature>
<feature type="helix" evidence="14">
    <location>
        <begin position="248"/>
        <end position="257"/>
    </location>
</feature>
<proteinExistence type="evidence at protein level"/>
<evidence type="ECO:0000269" key="1">
    <source>
    </source>
</evidence>
<evidence type="ECO:0000269" key="2">
    <source>
    </source>
</evidence>
<evidence type="ECO:0000269" key="3">
    <source>
    </source>
</evidence>
<evidence type="ECO:0000269" key="4">
    <source>
    </source>
</evidence>
<evidence type="ECO:0000303" key="5">
    <source>
    </source>
</evidence>
<evidence type="ECO:0000303" key="6">
    <source>
    </source>
</evidence>
<evidence type="ECO:0000305" key="7"/>
<evidence type="ECO:0000305" key="8">
    <source>
    </source>
</evidence>
<evidence type="ECO:0000305" key="9">
    <source>
    </source>
</evidence>
<evidence type="ECO:0007744" key="10">
    <source>
    </source>
</evidence>
<evidence type="ECO:0007744" key="11">
    <source>
    </source>
</evidence>
<evidence type="ECO:0007744" key="12">
    <source>
    </source>
</evidence>
<evidence type="ECO:0007744" key="13">
    <source>
    </source>
</evidence>
<evidence type="ECO:0007829" key="14">
    <source>
        <dbReference type="PDB" id="8CAS"/>
    </source>
</evidence>
<organism>
    <name type="scientific">Saccharomyces cerevisiae (strain ATCC 204508 / S288c)</name>
    <name type="common">Baker's yeast</name>
    <dbReference type="NCBI Taxonomy" id="559292"/>
    <lineage>
        <taxon>Eukaryota</taxon>
        <taxon>Fungi</taxon>
        <taxon>Dikarya</taxon>
        <taxon>Ascomycota</taxon>
        <taxon>Saccharomycotina</taxon>
        <taxon>Saccharomycetes</taxon>
        <taxon>Saccharomycetales</taxon>
        <taxon>Saccharomycetaceae</taxon>
        <taxon>Saccharomyces</taxon>
    </lineage>
</organism>